<dbReference type="EC" id="3.2.1.8" evidence="4"/>
<dbReference type="EMBL" id="KF766535">
    <property type="protein sequence ID" value="AHC74025.1"/>
    <property type="molecule type" value="Genomic_DNA"/>
</dbReference>
<dbReference type="EMBL" id="QJSW01000010">
    <property type="protein sequence ID" value="PYE48003.1"/>
    <property type="molecule type" value="Genomic_DNA"/>
</dbReference>
<dbReference type="RefSeq" id="WP_110897546.1">
    <property type="nucleotide sequence ID" value="NZ_CP054614.1"/>
</dbReference>
<dbReference type="SMR" id="V9TXH2"/>
<dbReference type="OrthoDB" id="9806342at2"/>
<dbReference type="UniPathway" id="UPA00114"/>
<dbReference type="Proteomes" id="UP000247790">
    <property type="component" value="Unassembled WGS sequence"/>
</dbReference>
<dbReference type="GO" id="GO:0005576">
    <property type="term" value="C:extracellular region"/>
    <property type="evidence" value="ECO:0007669"/>
    <property type="project" value="UniProtKB-SubCell"/>
</dbReference>
<dbReference type="GO" id="GO:0031176">
    <property type="term" value="F:endo-1,4-beta-xylanase activity"/>
    <property type="evidence" value="ECO:0000314"/>
    <property type="project" value="UniProtKB"/>
</dbReference>
<dbReference type="GO" id="GO:0045493">
    <property type="term" value="P:xylan catabolic process"/>
    <property type="evidence" value="ECO:0000314"/>
    <property type="project" value="UniProtKB"/>
</dbReference>
<dbReference type="FunFam" id="2.60.120.180:FF:000001">
    <property type="entry name" value="Endo-1,4-beta-xylanase"/>
    <property type="match status" value="1"/>
</dbReference>
<dbReference type="Gene3D" id="2.60.120.180">
    <property type="match status" value="1"/>
</dbReference>
<dbReference type="InterPro" id="IPR013320">
    <property type="entry name" value="ConA-like_dom_sf"/>
</dbReference>
<dbReference type="InterPro" id="IPR013319">
    <property type="entry name" value="GH11/12"/>
</dbReference>
<dbReference type="InterPro" id="IPR018208">
    <property type="entry name" value="GH11_AS_1"/>
</dbReference>
<dbReference type="InterPro" id="IPR033119">
    <property type="entry name" value="GH11_AS_2"/>
</dbReference>
<dbReference type="InterPro" id="IPR033123">
    <property type="entry name" value="GH11_dom"/>
</dbReference>
<dbReference type="InterPro" id="IPR001137">
    <property type="entry name" value="Glyco_hydro_11"/>
</dbReference>
<dbReference type="PANTHER" id="PTHR46828">
    <property type="entry name" value="ENDO-1,4-BETA-XYLANASE A-RELATED"/>
    <property type="match status" value="1"/>
</dbReference>
<dbReference type="PANTHER" id="PTHR46828:SF2">
    <property type="entry name" value="ENDO-1,4-BETA-XYLANASE A-RELATED"/>
    <property type="match status" value="1"/>
</dbReference>
<dbReference type="Pfam" id="PF00457">
    <property type="entry name" value="Glyco_hydro_11"/>
    <property type="match status" value="1"/>
</dbReference>
<dbReference type="PRINTS" id="PR00911">
    <property type="entry name" value="GLHYDRLASE11"/>
</dbReference>
<dbReference type="SUPFAM" id="SSF49899">
    <property type="entry name" value="Concanavalin A-like lectins/glucanases"/>
    <property type="match status" value="1"/>
</dbReference>
<dbReference type="PROSITE" id="PS00776">
    <property type="entry name" value="GH11_1"/>
    <property type="match status" value="1"/>
</dbReference>
<dbReference type="PROSITE" id="PS00777">
    <property type="entry name" value="GH11_2"/>
    <property type="match status" value="1"/>
</dbReference>
<dbReference type="PROSITE" id="PS51761">
    <property type="entry name" value="GH11_3"/>
    <property type="match status" value="1"/>
</dbReference>
<accession>V9TXH2</accession>
<protein>
    <recommendedName>
        <fullName evidence="5">Endo-1,4-beta-xylanase Xyn11E</fullName>
        <ecNumber evidence="4">3.2.1.8</ecNumber>
    </recommendedName>
</protein>
<organism>
    <name type="scientific">Paenibacillus barcinonensis</name>
    <dbReference type="NCBI Taxonomy" id="198119"/>
    <lineage>
        <taxon>Bacteria</taxon>
        <taxon>Bacillati</taxon>
        <taxon>Bacillota</taxon>
        <taxon>Bacilli</taxon>
        <taxon>Bacillales</taxon>
        <taxon>Paenibacillaceae</taxon>
        <taxon>Paenibacillus</taxon>
    </lineage>
</organism>
<reference key="1">
    <citation type="journal article" date="2014" name="Appl. Microbiol. Biotechnol.">
        <title>Xyn11E from Paenibacillus barcinonensis BP-23: a LppX-chaperone-dependent xylanase with potential for upgrading paper pulps.</title>
        <authorList>
            <person name="Valenzuela S.V."/>
            <person name="Diaz P."/>
            <person name="Pastor F.I."/>
        </authorList>
    </citation>
    <scope>NUCLEOTIDE SEQUENCE [GENOMIC DNA]</scope>
    <scope>FUNCTION</scope>
    <scope>CATALYTIC ACTIVITY</scope>
    <scope>SUBSTRATE SPECIFICITY</scope>
    <scope>BIOPHYSICOCHEMICAL PROPERTIES</scope>
    <scope>PATHWAY</scope>
    <scope>BIOTECHNOLOGY</scope>
    <source>
        <strain>DSM 15478 / BCRC 17560 / CECT 7022 / CIP 108718 / BP-23</strain>
    </source>
</reference>
<reference key="2">
    <citation type="journal article" date="2015" name="Stand. Genomic Sci.">
        <title>Genomic Encyclopedia of Bacterial and Archaeal Type Strains, Phase III: the genomes of soil and plant-associated and newly described type strains.</title>
        <authorList>
            <person name="Whitman W.B."/>
            <person name="Woyke T."/>
            <person name="Klenk H.P."/>
            <person name="Zhou Y."/>
            <person name="Lilburn T.G."/>
            <person name="Beck B.J."/>
            <person name="De Vos P."/>
            <person name="Vandamme P."/>
            <person name="Eisen J.A."/>
            <person name="Garrity G."/>
            <person name="Hugenholtz P."/>
            <person name="Kyrpides N.C."/>
        </authorList>
    </citation>
    <scope>NUCLEOTIDE SEQUENCE [LARGE SCALE GENOMIC DNA]</scope>
    <source>
        <strain>DSM 15478 / BCRC 17560 / CECT 7022 / CIP 108718 / BP-23</strain>
    </source>
</reference>
<gene>
    <name evidence="5 8" type="primary">xyn11E</name>
    <name evidence="9" type="ORF">DFQ00_11065</name>
</gene>
<feature type="signal peptide" evidence="1">
    <location>
        <begin position="1"/>
        <end position="23"/>
    </location>
</feature>
<feature type="chain" id="PRO_5016557792" description="Endo-1,4-beta-xylanase Xyn11E">
    <location>
        <begin position="24"/>
        <end position="210"/>
    </location>
</feature>
<feature type="domain" description="GH11" evidence="2">
    <location>
        <begin position="24"/>
        <end position="210"/>
    </location>
</feature>
<feature type="active site" description="Nucleophile" evidence="2 3">
    <location>
        <position position="104"/>
    </location>
</feature>
<feature type="active site" description="Proton donor" evidence="2 3">
    <location>
        <position position="197"/>
    </location>
</feature>
<name>XYN11_PAEBA</name>
<keyword id="KW-0119">Carbohydrate metabolism</keyword>
<keyword id="KW-0326">Glycosidase</keyword>
<keyword id="KW-0378">Hydrolase</keyword>
<keyword id="KW-0624">Polysaccharide degradation</keyword>
<keyword id="KW-0964">Secreted</keyword>
<keyword id="KW-0732">Signal</keyword>
<keyword id="KW-0858">Xylan degradation</keyword>
<proteinExistence type="evidence at protein level"/>
<evidence type="ECO:0000255" key="1"/>
<evidence type="ECO:0000255" key="2">
    <source>
        <dbReference type="PROSITE-ProRule" id="PRU01097"/>
    </source>
</evidence>
<evidence type="ECO:0000255" key="3">
    <source>
        <dbReference type="PROSITE-ProRule" id="PRU10062"/>
    </source>
</evidence>
<evidence type="ECO:0000269" key="4">
    <source>
    </source>
</evidence>
<evidence type="ECO:0000303" key="5">
    <source>
    </source>
</evidence>
<evidence type="ECO:0000305" key="6"/>
<evidence type="ECO:0000305" key="7">
    <source>
    </source>
</evidence>
<evidence type="ECO:0000312" key="8">
    <source>
        <dbReference type="EMBL" id="AHC74025.1"/>
    </source>
</evidence>
<evidence type="ECO:0000312" key="9">
    <source>
        <dbReference type="EMBL" id="PYE48003.1"/>
    </source>
</evidence>
<comment type="function">
    <text evidence="4">Involved in depolymerization of xylan, a major component of the lignocellulosic substrates. Acts as an endo-xylanase that efficiently hydrolyzes the beta-1,4 glycosidic linkages between the xylopyranosyl residues in the main chain of the polymer, leading to the degradation of xylan into short oligosaccharides. Shows high activity toward branched xylans from both softwoods (arabinoxylans) and hardwoods (glucuronoxylans), showing the highest activity on beechwood xylan. Also hydrolyzes long xylooligosaccharides (with a degree of polymerization of greater than or equal to 5), while oligomers shorter than xylotetraose are not degraded. Is not active on carboxymethyl cellulose (CMC), Avicel, starch, polygalacturonic acid, laminarin, pectin, beta-D-barley glucan, or lichenan.</text>
</comment>
<comment type="catalytic activity">
    <reaction evidence="4">
        <text>Endohydrolysis of (1-&gt;4)-beta-D-xylosidic linkages in xylans.</text>
        <dbReference type="EC" id="3.2.1.8"/>
    </reaction>
</comment>
<comment type="biophysicochemical properties">
    <kinetics>
        <KM evidence="4">12.98 mg/ml for beechwood xylan</KM>
        <Vmax evidence="4">3023.0 umol/min/mg enzyme for the hydrolysis of beechwood xylan</Vmax>
    </kinetics>
    <phDependence>
        <text evidence="4">Optimum pH is 6.5.</text>
    </phDependence>
    <temperatureDependence>
        <text evidence="4">Optimum temperature is 50 degrees Celsius. Retains about 80% of the activity after incubation for 2 hours at 50 degrees Celsius, but is rapidly inactivated at higher temperatures.</text>
    </temperatureDependence>
</comment>
<comment type="pathway">
    <text evidence="4">Glycan degradation; xylan degradation.</text>
</comment>
<comment type="subcellular location">
    <subcellularLocation>
        <location evidence="7">Secreted</location>
    </subcellularLocation>
</comment>
<comment type="biotechnology">
    <text evidence="4">This enzyme liberates reducing sugars from elemental chlorine free (ECF) and totally chlorine free (TCF) bleached pulps from eucalyptus, sisal, and flax, which makes it a good candidate for the enzymatic-assisted production of high-cellulose-content pulps from paper-grade pulps.</text>
</comment>
<comment type="miscellaneous">
    <text evidence="4">Is dependent on P.barcinonensis lipoprotein LppX for its expression in an active form.</text>
</comment>
<comment type="similarity">
    <text evidence="6">Belongs to the glycosyl hydrolase 11 (cellulase G) family.</text>
</comment>
<sequence>MFKFGKKLMTVVLAASMSFGVFAATTGATDYWQNWTDGGGTVNAVNGSGGNYSVNWQNTGNFVVGKGWTYGTPNRVVNYNAGVFSPSGNGYLTFYGWTRNALIEYYVVDNWGTYRPTGTYKGTVNSDGGTYDIYTTMRYNQPSIDGYSTFPQYWSVRQSKRPIGVNSQITFQNHVNAWASKGMNLGSSWSYQVLATEGYQSSGSSNVTVW</sequence>